<evidence type="ECO:0000255" key="1">
    <source>
        <dbReference type="HAMAP-Rule" id="MF_00531"/>
    </source>
</evidence>
<evidence type="ECO:0000256" key="2">
    <source>
        <dbReference type="SAM" id="MobiDB-lite"/>
    </source>
</evidence>
<evidence type="ECO:0000305" key="3"/>
<reference key="1">
    <citation type="submission" date="2007-11" db="EMBL/GenBank/DDBJ databases">
        <title>Complete sequence of Petroga mobilis SJ95.</title>
        <authorList>
            <consortium name="US DOE Joint Genome Institute"/>
            <person name="Copeland A."/>
            <person name="Lucas S."/>
            <person name="Lapidus A."/>
            <person name="Barry K."/>
            <person name="Glavina del Rio T."/>
            <person name="Dalin E."/>
            <person name="Tice H."/>
            <person name="Pitluck S."/>
            <person name="Meincke L."/>
            <person name="Brettin T."/>
            <person name="Bruce D."/>
            <person name="Detter J.C."/>
            <person name="Han C."/>
            <person name="Kuske C.R."/>
            <person name="Schmutz J."/>
            <person name="Larimer F."/>
            <person name="Land M."/>
            <person name="Hauser L."/>
            <person name="Kyrpides N."/>
            <person name="Mikhailova N."/>
            <person name="Noll K."/>
            <person name="Richardson P."/>
        </authorList>
    </citation>
    <scope>NUCLEOTIDE SEQUENCE [LARGE SCALE GENOMIC DNA]</scope>
    <source>
        <strain>DSM 10674 / SJ95</strain>
    </source>
</reference>
<accession>A9BHA1</accession>
<sequence>MGRSLKKGPYVHPSLIKKIREMNEKGEKKVIKTWSRASMILPEMVGHTIAVHNGMKHIPVYITEQMIGHRLGEFSPTRRFGGHPDKKAVKGKIEKQG</sequence>
<name>RS19_PETMO</name>
<gene>
    <name evidence="1" type="primary">rpsS</name>
    <name type="ordered locus">Pmob_0786</name>
</gene>
<keyword id="KW-0687">Ribonucleoprotein</keyword>
<keyword id="KW-0689">Ribosomal protein</keyword>
<keyword id="KW-0694">RNA-binding</keyword>
<keyword id="KW-0699">rRNA-binding</keyword>
<comment type="function">
    <text evidence="1">Protein S19 forms a complex with S13 that binds strongly to the 16S ribosomal RNA.</text>
</comment>
<comment type="similarity">
    <text evidence="1">Belongs to the universal ribosomal protein uS19 family.</text>
</comment>
<dbReference type="EMBL" id="CP000879">
    <property type="protein sequence ID" value="ABX31510.1"/>
    <property type="molecule type" value="Genomic_DNA"/>
</dbReference>
<dbReference type="RefSeq" id="WP_012208613.1">
    <property type="nucleotide sequence ID" value="NC_010003.1"/>
</dbReference>
<dbReference type="SMR" id="A9BHA1"/>
<dbReference type="STRING" id="403833.Pmob_0786"/>
<dbReference type="KEGG" id="pmo:Pmob_0786"/>
<dbReference type="eggNOG" id="COG0185">
    <property type="taxonomic scope" value="Bacteria"/>
</dbReference>
<dbReference type="HOGENOM" id="CLU_144911_0_1_0"/>
<dbReference type="OrthoDB" id="9797833at2"/>
<dbReference type="Proteomes" id="UP000000789">
    <property type="component" value="Chromosome"/>
</dbReference>
<dbReference type="GO" id="GO:0005737">
    <property type="term" value="C:cytoplasm"/>
    <property type="evidence" value="ECO:0007669"/>
    <property type="project" value="UniProtKB-ARBA"/>
</dbReference>
<dbReference type="GO" id="GO:0015935">
    <property type="term" value="C:small ribosomal subunit"/>
    <property type="evidence" value="ECO:0007669"/>
    <property type="project" value="InterPro"/>
</dbReference>
<dbReference type="GO" id="GO:0019843">
    <property type="term" value="F:rRNA binding"/>
    <property type="evidence" value="ECO:0007669"/>
    <property type="project" value="UniProtKB-UniRule"/>
</dbReference>
<dbReference type="GO" id="GO:0003735">
    <property type="term" value="F:structural constituent of ribosome"/>
    <property type="evidence" value="ECO:0007669"/>
    <property type="project" value="InterPro"/>
</dbReference>
<dbReference type="GO" id="GO:0000028">
    <property type="term" value="P:ribosomal small subunit assembly"/>
    <property type="evidence" value="ECO:0007669"/>
    <property type="project" value="TreeGrafter"/>
</dbReference>
<dbReference type="GO" id="GO:0006412">
    <property type="term" value="P:translation"/>
    <property type="evidence" value="ECO:0007669"/>
    <property type="project" value="UniProtKB-UniRule"/>
</dbReference>
<dbReference type="FunFam" id="3.30.860.10:FF:000001">
    <property type="entry name" value="30S ribosomal protein S19"/>
    <property type="match status" value="1"/>
</dbReference>
<dbReference type="Gene3D" id="3.30.860.10">
    <property type="entry name" value="30s Ribosomal Protein S19, Chain A"/>
    <property type="match status" value="1"/>
</dbReference>
<dbReference type="HAMAP" id="MF_00531">
    <property type="entry name" value="Ribosomal_uS19"/>
    <property type="match status" value="1"/>
</dbReference>
<dbReference type="InterPro" id="IPR002222">
    <property type="entry name" value="Ribosomal_uS19"/>
</dbReference>
<dbReference type="InterPro" id="IPR005732">
    <property type="entry name" value="Ribosomal_uS19_bac-type"/>
</dbReference>
<dbReference type="InterPro" id="IPR020934">
    <property type="entry name" value="Ribosomal_uS19_CS"/>
</dbReference>
<dbReference type="InterPro" id="IPR023575">
    <property type="entry name" value="Ribosomal_uS19_SF"/>
</dbReference>
<dbReference type="NCBIfam" id="TIGR01050">
    <property type="entry name" value="rpsS_bact"/>
    <property type="match status" value="1"/>
</dbReference>
<dbReference type="PANTHER" id="PTHR11880">
    <property type="entry name" value="RIBOSOMAL PROTEIN S19P FAMILY MEMBER"/>
    <property type="match status" value="1"/>
</dbReference>
<dbReference type="PANTHER" id="PTHR11880:SF8">
    <property type="entry name" value="SMALL RIBOSOMAL SUBUNIT PROTEIN US19M"/>
    <property type="match status" value="1"/>
</dbReference>
<dbReference type="Pfam" id="PF00203">
    <property type="entry name" value="Ribosomal_S19"/>
    <property type="match status" value="1"/>
</dbReference>
<dbReference type="PIRSF" id="PIRSF002144">
    <property type="entry name" value="Ribosomal_S19"/>
    <property type="match status" value="1"/>
</dbReference>
<dbReference type="PRINTS" id="PR00975">
    <property type="entry name" value="RIBOSOMALS19"/>
</dbReference>
<dbReference type="SUPFAM" id="SSF54570">
    <property type="entry name" value="Ribosomal protein S19"/>
    <property type="match status" value="1"/>
</dbReference>
<dbReference type="PROSITE" id="PS00323">
    <property type="entry name" value="RIBOSOMAL_S19"/>
    <property type="match status" value="1"/>
</dbReference>
<proteinExistence type="inferred from homology"/>
<organism>
    <name type="scientific">Petrotoga mobilis (strain DSM 10674 / SJ95)</name>
    <dbReference type="NCBI Taxonomy" id="403833"/>
    <lineage>
        <taxon>Bacteria</taxon>
        <taxon>Thermotogati</taxon>
        <taxon>Thermotogota</taxon>
        <taxon>Thermotogae</taxon>
        <taxon>Petrotogales</taxon>
        <taxon>Petrotogaceae</taxon>
        <taxon>Petrotoga</taxon>
    </lineage>
</organism>
<protein>
    <recommendedName>
        <fullName evidence="1">Small ribosomal subunit protein uS19</fullName>
    </recommendedName>
    <alternativeName>
        <fullName evidence="3">30S ribosomal protein S19</fullName>
    </alternativeName>
</protein>
<feature type="chain" id="PRO_1000081782" description="Small ribosomal subunit protein uS19">
    <location>
        <begin position="1"/>
        <end position="97"/>
    </location>
</feature>
<feature type="region of interest" description="Disordered" evidence="2">
    <location>
        <begin position="74"/>
        <end position="97"/>
    </location>
</feature>
<feature type="compositionally biased region" description="Basic and acidic residues" evidence="2">
    <location>
        <begin position="82"/>
        <end position="97"/>
    </location>
</feature>